<reference key="1">
    <citation type="journal article" date="1998" name="Nature">
        <title>Deciphering the biology of Mycobacterium tuberculosis from the complete genome sequence.</title>
        <authorList>
            <person name="Cole S.T."/>
            <person name="Brosch R."/>
            <person name="Parkhill J."/>
            <person name="Garnier T."/>
            <person name="Churcher C.M."/>
            <person name="Harris D.E."/>
            <person name="Gordon S.V."/>
            <person name="Eiglmeier K."/>
            <person name="Gas S."/>
            <person name="Barry C.E. III"/>
            <person name="Tekaia F."/>
            <person name="Badcock K."/>
            <person name="Basham D."/>
            <person name="Brown D."/>
            <person name="Chillingworth T."/>
            <person name="Connor R."/>
            <person name="Davies R.M."/>
            <person name="Devlin K."/>
            <person name="Feltwell T."/>
            <person name="Gentles S."/>
            <person name="Hamlin N."/>
            <person name="Holroyd S."/>
            <person name="Hornsby T."/>
            <person name="Jagels K."/>
            <person name="Krogh A."/>
            <person name="McLean J."/>
            <person name="Moule S."/>
            <person name="Murphy L.D."/>
            <person name="Oliver S."/>
            <person name="Osborne J."/>
            <person name="Quail M.A."/>
            <person name="Rajandream M.A."/>
            <person name="Rogers J."/>
            <person name="Rutter S."/>
            <person name="Seeger K."/>
            <person name="Skelton S."/>
            <person name="Squares S."/>
            <person name="Squares R."/>
            <person name="Sulston J.E."/>
            <person name="Taylor K."/>
            <person name="Whitehead S."/>
            <person name="Barrell B.G."/>
        </authorList>
    </citation>
    <scope>NUCLEOTIDE SEQUENCE [LARGE SCALE GENOMIC DNA]</scope>
    <source>
        <strain>ATCC 25618 / H37Rv</strain>
    </source>
</reference>
<reference key="2">
    <citation type="journal article" date="2005" name="Proc. Natl. Acad. Sci. U.S.A.">
        <title>Variant tricarboxylic acid cycle in Mycobacterium tuberculosis: identification of alpha-ketoglutarate decarboxylase.</title>
        <authorList>
            <person name="Tian J."/>
            <person name="Bryk R."/>
            <person name="Itoh M."/>
            <person name="Suematsu M."/>
            <person name="Nathan C."/>
        </authorList>
    </citation>
    <scope>FUNCTION</scope>
    <scope>CATALYTIC ACTIVITY</scope>
    <source>
        <strain>ATCC 25618 / H37Rv</strain>
    </source>
</reference>
<reference key="3">
    <citation type="journal article" date="2011" name="Mol. Cell. Proteomics">
        <title>Proteogenomic analysis of Mycobacterium tuberculosis by high resolution mass spectrometry.</title>
        <authorList>
            <person name="Kelkar D.S."/>
            <person name="Kumar D."/>
            <person name="Kumar P."/>
            <person name="Balakrishnan L."/>
            <person name="Muthusamy B."/>
            <person name="Yadav A.K."/>
            <person name="Shrivastava P."/>
            <person name="Marimuthu A."/>
            <person name="Anand S."/>
            <person name="Sundaram H."/>
            <person name="Kingsbury R."/>
            <person name="Harsha H.C."/>
            <person name="Nair B."/>
            <person name="Prasad T.S."/>
            <person name="Chauhan D.S."/>
            <person name="Katoch K."/>
            <person name="Katoch V.M."/>
            <person name="Kumar P."/>
            <person name="Chaerkady R."/>
            <person name="Ramachandran S."/>
            <person name="Dash D."/>
            <person name="Pandey A."/>
        </authorList>
    </citation>
    <scope>IDENTIFICATION BY MASS SPECTROMETRY [LARGE SCALE ANALYSIS]</scope>
    <source>
        <strain>ATCC 25618 / H37Rv</strain>
    </source>
</reference>
<name>GABD2_MYCTU</name>
<protein>
    <recommendedName>
        <fullName>Putative succinate-semialdehyde dehydrogenase [NADP(+)] 2</fullName>
        <shortName>SSADH 2</shortName>
        <shortName>SSDH 2</shortName>
        <ecNumber>1.2.1.79</ecNumber>
    </recommendedName>
</protein>
<evidence type="ECO:0000250" key="1"/>
<evidence type="ECO:0000255" key="2">
    <source>
        <dbReference type="PROSITE-ProRule" id="PRU10007"/>
    </source>
</evidence>
<evidence type="ECO:0000269" key="3">
    <source>
    </source>
</evidence>
<evidence type="ECO:0000305" key="4"/>
<sequence>MPAPSAEVFDRLRNLAAIKDVAARPTRTIDEVFTGKPLTTIPVGTAADVEAAFAEARAAQTDWAKRPVIERAAVIRRYRDLVIENREFLMDLLQAEAGKARWAAQEEIVDLIANANYYARVCVDLLKPRKAQPLLPGIGKTTVCYQPKGVVGVISPWNYPMTLTVSDSVPALVAGNAVVLKPDSQTPYCALACAELLYRAGLPRALYAIVPGPGSVVGTAITDNCDYLMFTGSSATGSRLAEHAGRRLIGFSAELGGKNPMIVARGANLDKVAKAATRACFSNAGQLCISIERIYVEKDIAEEFTRKFGDAVRNMKLGTAYDFSVDMGSLISEAQLKTVSGHVDDATAKGAKVIAGGKARPDIGPLFYEPTVLTNVAPEMECAANETFGPVVSIYPVADVDEAVEKANDTDYGLNASVWAGSTAEGQRIAARLRSGTVNVDEGYAFAWGSLSAPMGGMGLSGVGRRHGPEGLLKYTESQTIATARVFNLDPPFGIPATVWQKSLLPIVRTVMKLPGRR</sequence>
<keyword id="KW-0521">NADP</keyword>
<keyword id="KW-0560">Oxidoreductase</keyword>
<keyword id="KW-1185">Reference proteome</keyword>
<feature type="chain" id="PRO_0000310711" description="Putative succinate-semialdehyde dehydrogenase [NADP(+)] 2">
    <location>
        <begin position="1"/>
        <end position="518"/>
    </location>
</feature>
<feature type="active site" description="Proton acceptor" evidence="2">
    <location>
        <position position="254"/>
    </location>
</feature>
<feature type="active site" description="Nucleophile" evidence="2">
    <location>
        <position position="288"/>
    </location>
</feature>
<feature type="binding site" evidence="1">
    <location>
        <begin position="157"/>
        <end position="158"/>
    </location>
    <ligand>
        <name>NADP(+)</name>
        <dbReference type="ChEBI" id="CHEBI:58349"/>
    </ligand>
</feature>
<feature type="binding site" evidence="1">
    <location>
        <begin position="181"/>
        <end position="184"/>
    </location>
    <ligand>
        <name>NADP(+)</name>
        <dbReference type="ChEBI" id="CHEBI:58349"/>
    </ligand>
</feature>
<feature type="binding site" evidence="1">
    <location>
        <begin position="232"/>
        <end position="233"/>
    </location>
    <ligand>
        <name>NADP(+)</name>
        <dbReference type="ChEBI" id="CHEBI:58349"/>
    </ligand>
</feature>
<feature type="binding site" evidence="1">
    <location>
        <position position="255"/>
    </location>
    <ligand>
        <name>NADP(+)</name>
        <dbReference type="ChEBI" id="CHEBI:58349"/>
    </ligand>
</feature>
<feature type="binding site" evidence="1">
    <location>
        <position position="386"/>
    </location>
    <ligand>
        <name>NADP(+)</name>
        <dbReference type="ChEBI" id="CHEBI:58349"/>
    </ligand>
</feature>
<dbReference type="EC" id="1.2.1.79"/>
<dbReference type="EMBL" id="AL123456">
    <property type="protein sequence ID" value="CCP44497.1"/>
    <property type="molecule type" value="Genomic_DNA"/>
</dbReference>
<dbReference type="PIR" id="H70962">
    <property type="entry name" value="H70962"/>
</dbReference>
<dbReference type="RefSeq" id="NP_214748.2">
    <property type="nucleotide sequence ID" value="NC_000962.3"/>
</dbReference>
<dbReference type="RefSeq" id="WP_003898989.1">
    <property type="nucleotide sequence ID" value="NZ_NVQJ01000010.1"/>
</dbReference>
<dbReference type="SMR" id="P9WNX7"/>
<dbReference type="FunCoup" id="P9WNX7">
    <property type="interactions" value="61"/>
</dbReference>
<dbReference type="STRING" id="83332.Rv1731"/>
<dbReference type="PaxDb" id="83332-Rv1731"/>
<dbReference type="GeneID" id="885204"/>
<dbReference type="KEGG" id="mtu:Rv1731"/>
<dbReference type="KEGG" id="mtv:RVBD_1731"/>
<dbReference type="TubercuList" id="Rv1731"/>
<dbReference type="eggNOG" id="COG1012">
    <property type="taxonomic scope" value="Bacteria"/>
</dbReference>
<dbReference type="InParanoid" id="P9WNX7"/>
<dbReference type="OrthoDB" id="6882680at2"/>
<dbReference type="PhylomeDB" id="P9WNX7"/>
<dbReference type="SABIO-RK" id="P9WNX7"/>
<dbReference type="Proteomes" id="UP000001584">
    <property type="component" value="Chromosome"/>
</dbReference>
<dbReference type="GO" id="GO:0005886">
    <property type="term" value="C:plasma membrane"/>
    <property type="evidence" value="ECO:0007005"/>
    <property type="project" value="MTBBASE"/>
</dbReference>
<dbReference type="GO" id="GO:0036243">
    <property type="term" value="F:succinate-semialdehyde dehydrogenase (NADP+) activity"/>
    <property type="evidence" value="ECO:0007669"/>
    <property type="project" value="UniProtKB-EC"/>
</dbReference>
<dbReference type="GO" id="GO:0009013">
    <property type="term" value="F:succinate-semialdehyde dehydrogenase [NAD(P)+] activity"/>
    <property type="evidence" value="ECO:0000314"/>
    <property type="project" value="MTBBASE"/>
</dbReference>
<dbReference type="GO" id="GO:0006099">
    <property type="term" value="P:tricarboxylic acid cycle"/>
    <property type="evidence" value="ECO:0000314"/>
    <property type="project" value="MTBBASE"/>
</dbReference>
<dbReference type="CDD" id="cd07101">
    <property type="entry name" value="ALDH_SSADH2_GabD2"/>
    <property type="match status" value="1"/>
</dbReference>
<dbReference type="FunFam" id="3.40.309.10:FF:000009">
    <property type="entry name" value="Aldehyde dehydrogenase A"/>
    <property type="match status" value="1"/>
</dbReference>
<dbReference type="FunFam" id="3.40.605.10:FF:000010">
    <property type="entry name" value="N-succinylglutamate 5-semialdehyde dehydrogenase"/>
    <property type="match status" value="1"/>
</dbReference>
<dbReference type="Gene3D" id="3.40.605.10">
    <property type="entry name" value="Aldehyde Dehydrogenase, Chain A, domain 1"/>
    <property type="match status" value="1"/>
</dbReference>
<dbReference type="Gene3D" id="3.40.309.10">
    <property type="entry name" value="Aldehyde Dehydrogenase, Chain A, domain 2"/>
    <property type="match status" value="1"/>
</dbReference>
<dbReference type="InterPro" id="IPR016161">
    <property type="entry name" value="Ald_DH/histidinol_DH"/>
</dbReference>
<dbReference type="InterPro" id="IPR016163">
    <property type="entry name" value="Ald_DH_C"/>
</dbReference>
<dbReference type="InterPro" id="IPR029510">
    <property type="entry name" value="Ald_DH_CS_GLU"/>
</dbReference>
<dbReference type="InterPro" id="IPR016162">
    <property type="entry name" value="Ald_DH_N"/>
</dbReference>
<dbReference type="InterPro" id="IPR015590">
    <property type="entry name" value="Aldehyde_DH_dom"/>
</dbReference>
<dbReference type="NCBIfam" id="NF006916">
    <property type="entry name" value="PRK09407.1"/>
    <property type="match status" value="1"/>
</dbReference>
<dbReference type="PANTHER" id="PTHR11699">
    <property type="entry name" value="ALDEHYDE DEHYDROGENASE-RELATED"/>
    <property type="match status" value="1"/>
</dbReference>
<dbReference type="Pfam" id="PF00171">
    <property type="entry name" value="Aldedh"/>
    <property type="match status" value="1"/>
</dbReference>
<dbReference type="SUPFAM" id="SSF53720">
    <property type="entry name" value="ALDH-like"/>
    <property type="match status" value="1"/>
</dbReference>
<dbReference type="PROSITE" id="PS00687">
    <property type="entry name" value="ALDEHYDE_DEHYDR_GLU"/>
    <property type="match status" value="1"/>
</dbReference>
<comment type="function">
    <text evidence="3">Catalyzes the NADP(+)-dependent oxidation of succinate semialdehyde to succinate. Although it has succinate semialdehyde dehydrogenase activity, is likely to act physiologically on a different aldehyde(s). NAD(+) can substitute for NADP(+), but enzymatic activity is three times reduced.</text>
</comment>
<comment type="catalytic activity">
    <reaction evidence="3">
        <text>succinate semialdehyde + NADP(+) + H2O = succinate + NADPH + 2 H(+)</text>
        <dbReference type="Rhea" id="RHEA:13213"/>
        <dbReference type="ChEBI" id="CHEBI:15377"/>
        <dbReference type="ChEBI" id="CHEBI:15378"/>
        <dbReference type="ChEBI" id="CHEBI:30031"/>
        <dbReference type="ChEBI" id="CHEBI:57706"/>
        <dbReference type="ChEBI" id="CHEBI:57783"/>
        <dbReference type="ChEBI" id="CHEBI:58349"/>
        <dbReference type="EC" id="1.2.1.79"/>
    </reaction>
</comment>
<comment type="similarity">
    <text evidence="4">Belongs to the aldehyde dehydrogenase family.</text>
</comment>
<proteinExistence type="evidence at protein level"/>
<organism>
    <name type="scientific">Mycobacterium tuberculosis (strain ATCC 25618 / H37Rv)</name>
    <dbReference type="NCBI Taxonomy" id="83332"/>
    <lineage>
        <taxon>Bacteria</taxon>
        <taxon>Bacillati</taxon>
        <taxon>Actinomycetota</taxon>
        <taxon>Actinomycetes</taxon>
        <taxon>Mycobacteriales</taxon>
        <taxon>Mycobacteriaceae</taxon>
        <taxon>Mycobacterium</taxon>
        <taxon>Mycobacterium tuberculosis complex</taxon>
    </lineage>
</organism>
<gene>
    <name type="primary">gabD2</name>
    <name type="ordered locus">Rv1731</name>
</gene>
<accession>P9WNX7</accession>
<accession>L0T7R6</accession>
<accession>P96417</accession>
<accession>Q7D824</accession>